<name>RSP2_CAEEL</name>
<feature type="chain" id="PRO_0000081949" description="Probable splicing factor, arginine/serine-rich 2">
    <location>
        <begin position="1"/>
        <end position="281"/>
    </location>
</feature>
<feature type="domain" description="RRM 1" evidence="3">
    <location>
        <begin position="2"/>
        <end position="72"/>
    </location>
</feature>
<feature type="domain" description="RRM 2" evidence="3">
    <location>
        <begin position="112"/>
        <end position="186"/>
    </location>
</feature>
<feature type="region of interest" description="Disordered" evidence="4">
    <location>
        <begin position="78"/>
        <end position="100"/>
    </location>
</feature>
<feature type="region of interest" description="Disordered" evidence="4">
    <location>
        <begin position="168"/>
        <end position="281"/>
    </location>
</feature>
<feature type="compositionally biased region" description="Basic and acidic residues" evidence="4">
    <location>
        <begin position="78"/>
        <end position="97"/>
    </location>
</feature>
<feature type="compositionally biased region" description="Basic and acidic residues" evidence="4">
    <location>
        <begin position="168"/>
        <end position="190"/>
    </location>
</feature>
<feature type="compositionally biased region" description="Basic residues" evidence="4">
    <location>
        <begin position="191"/>
        <end position="215"/>
    </location>
</feature>
<feature type="compositionally biased region" description="Basic and acidic residues" evidence="4">
    <location>
        <begin position="216"/>
        <end position="225"/>
    </location>
</feature>
<feature type="compositionally biased region" description="Basic residues" evidence="4">
    <location>
        <begin position="245"/>
        <end position="254"/>
    </location>
</feature>
<accession>Q23120</accession>
<reference evidence="9" key="1">
    <citation type="journal article" date="1998" name="Science">
        <title>Genome sequence of the nematode C. elegans: a platform for investigating biology.</title>
        <authorList>
            <consortium name="The C. elegans sequencing consortium"/>
        </authorList>
    </citation>
    <scope>NUCLEOTIDE SEQUENCE [LARGE SCALE GENOMIC DNA]</scope>
    <source>
        <strain evidence="9">Bristol N2</strain>
    </source>
</reference>
<reference evidence="8" key="2">
    <citation type="journal article" date="2000" name="EMBO J.">
        <title>Functional characterization of SR and SR-related genes in Caenorhabditis elegans.</title>
        <authorList>
            <person name="Longman D."/>
            <person name="Johnstone I.L."/>
            <person name="Caceres J.F."/>
        </authorList>
    </citation>
    <scope>IDENTIFICATION</scope>
    <scope>FUNCTION</scope>
</reference>
<reference evidence="8" key="3">
    <citation type="journal article" date="2000" name="Mech. Dev.">
        <title>Unique and redundant functions of SR proteins, a conserved family of splicing factors, in Caenorhabditis elegans development.</title>
        <authorList>
            <person name="Kawano T."/>
            <person name="Fujita M."/>
            <person name="Sakamoto H."/>
        </authorList>
    </citation>
    <scope>FUNCTION</scope>
    <scope>SUBCELLULAR LOCATION</scope>
</reference>
<organism>
    <name type="scientific">Caenorhabditis elegans</name>
    <dbReference type="NCBI Taxonomy" id="6239"/>
    <lineage>
        <taxon>Eukaryota</taxon>
        <taxon>Metazoa</taxon>
        <taxon>Ecdysozoa</taxon>
        <taxon>Nematoda</taxon>
        <taxon>Chromadorea</taxon>
        <taxon>Rhabditida</taxon>
        <taxon>Rhabditina</taxon>
        <taxon>Rhabditomorpha</taxon>
        <taxon>Rhabditoidea</taxon>
        <taxon>Rhabditidae</taxon>
        <taxon>Peloderinae</taxon>
        <taxon>Caenorhabditis</taxon>
    </lineage>
</organism>
<sequence length="281" mass="32421">MVRVYIGRLPNRASDRDVEHFFRGYGKLSDVIMKNGFGFVDFQDQRDADDAVHDLNGKELCGERVILEFPRRKVGYNEERSGSGFRGREPTFRKGGERQFSNRYSRPCSTRFRLVIDNLSTRYSWQDIKDHIRKLGIEPTYSEAHKRNVNQAIVCFTSHDDLRDAMNKLQGEDLNGRKLKCTDETRDRSRSRSPRRRSRSRSPTRSRSPPARRRSPGSDRSDRKSRSASPKKRSDKRARSESKSRSRSGGRRSRSNSPPNRSPSPKKRRDNSSPRSGSASP</sequence>
<evidence type="ECO:0000250" key="1">
    <source>
        <dbReference type="UniProtKB" id="Q9NEW6"/>
    </source>
</evidence>
<evidence type="ECO:0000255" key="2"/>
<evidence type="ECO:0000255" key="3">
    <source>
        <dbReference type="PROSITE-ProRule" id="PRU00176"/>
    </source>
</evidence>
<evidence type="ECO:0000256" key="4">
    <source>
        <dbReference type="SAM" id="MobiDB-lite"/>
    </source>
</evidence>
<evidence type="ECO:0000269" key="5">
    <source>
    </source>
</evidence>
<evidence type="ECO:0000269" key="6">
    <source>
    </source>
</evidence>
<evidence type="ECO:0000303" key="7">
    <source>
    </source>
</evidence>
<evidence type="ECO:0000305" key="8"/>
<evidence type="ECO:0000312" key="9">
    <source>
        <dbReference type="EMBL" id="CAA91394.1"/>
    </source>
</evidence>
<dbReference type="EMBL" id="Z66521">
    <property type="protein sequence ID" value="CAA91394.1"/>
    <property type="molecule type" value="Genomic_DNA"/>
</dbReference>
<dbReference type="PIR" id="T26084">
    <property type="entry name" value="T26084"/>
</dbReference>
<dbReference type="RefSeq" id="NP_496441.1">
    <property type="nucleotide sequence ID" value="NM_064040.7"/>
</dbReference>
<dbReference type="SMR" id="Q23120"/>
<dbReference type="BioGRID" id="40054">
    <property type="interactions" value="4"/>
</dbReference>
<dbReference type="DIP" id="DIP-26059N"/>
<dbReference type="FunCoup" id="Q23120">
    <property type="interactions" value="3153"/>
</dbReference>
<dbReference type="STRING" id="6239.W02B12.2.1"/>
<dbReference type="iPTMnet" id="Q23120"/>
<dbReference type="PaxDb" id="6239-W02B12.2"/>
<dbReference type="PeptideAtlas" id="Q23120"/>
<dbReference type="EnsemblMetazoa" id="W02B12.2.1">
    <property type="protein sequence ID" value="W02B12.2.1"/>
    <property type="gene ID" value="WBGene00004699"/>
</dbReference>
<dbReference type="GeneID" id="174747"/>
<dbReference type="KEGG" id="cel:CELE_W02B12.2"/>
<dbReference type="UCSC" id="W02B12.2">
    <property type="organism name" value="c. elegans"/>
</dbReference>
<dbReference type="AGR" id="WB:WBGene00004699"/>
<dbReference type="CTD" id="174747"/>
<dbReference type="WormBase" id="W02B12.2">
    <property type="protein sequence ID" value="CE03762"/>
    <property type="gene ID" value="WBGene00004699"/>
    <property type="gene designation" value="rsp-2"/>
</dbReference>
<dbReference type="eggNOG" id="KOG0106">
    <property type="taxonomic scope" value="Eukaryota"/>
</dbReference>
<dbReference type="HOGENOM" id="CLU_012062_34_2_1"/>
<dbReference type="InParanoid" id="Q23120"/>
<dbReference type="OMA" id="CFSTHDD"/>
<dbReference type="OrthoDB" id="1099063at2759"/>
<dbReference type="PhylomeDB" id="Q23120"/>
<dbReference type="Reactome" id="R-CEL-159236">
    <property type="pathway name" value="Transport of Mature mRNA derived from an Intron-Containing Transcript"/>
</dbReference>
<dbReference type="Reactome" id="R-CEL-72163">
    <property type="pathway name" value="mRNA Splicing - Major Pathway"/>
</dbReference>
<dbReference type="Reactome" id="R-CEL-72165">
    <property type="pathway name" value="mRNA Splicing - Minor Pathway"/>
</dbReference>
<dbReference type="Reactome" id="R-CEL-72187">
    <property type="pathway name" value="mRNA 3'-end processing"/>
</dbReference>
<dbReference type="Reactome" id="R-CEL-72203">
    <property type="pathway name" value="Processing of Capped Intron-Containing Pre-mRNA"/>
</dbReference>
<dbReference type="Reactome" id="R-CEL-73856">
    <property type="pathway name" value="RNA Polymerase II Transcription Termination"/>
</dbReference>
<dbReference type="PRO" id="PR:Q23120"/>
<dbReference type="Proteomes" id="UP000001940">
    <property type="component" value="Chromosome II"/>
</dbReference>
<dbReference type="Bgee" id="WBGene00004699">
    <property type="expression patterns" value="Expressed in embryo and 4 other cell types or tissues"/>
</dbReference>
<dbReference type="GO" id="GO:0016607">
    <property type="term" value="C:nuclear speck"/>
    <property type="evidence" value="ECO:0000318"/>
    <property type="project" value="GO_Central"/>
</dbReference>
<dbReference type="GO" id="GO:0005634">
    <property type="term" value="C:nucleus"/>
    <property type="evidence" value="ECO:0000314"/>
    <property type="project" value="UniProtKB"/>
</dbReference>
<dbReference type="GO" id="GO:0003723">
    <property type="term" value="F:RNA binding"/>
    <property type="evidence" value="ECO:0000250"/>
    <property type="project" value="WormBase"/>
</dbReference>
<dbReference type="GO" id="GO:0030154">
    <property type="term" value="P:cell differentiation"/>
    <property type="evidence" value="ECO:0007669"/>
    <property type="project" value="UniProtKB-KW"/>
</dbReference>
<dbReference type="GO" id="GO:0008406">
    <property type="term" value="P:gonad development"/>
    <property type="evidence" value="ECO:0000316"/>
    <property type="project" value="UniProtKB"/>
</dbReference>
<dbReference type="GO" id="GO:0007506">
    <property type="term" value="P:gonadal mesoderm development"/>
    <property type="evidence" value="ECO:0007669"/>
    <property type="project" value="UniProtKB-KW"/>
</dbReference>
<dbReference type="GO" id="GO:0000398">
    <property type="term" value="P:mRNA splicing, via spliceosome"/>
    <property type="evidence" value="ECO:0000250"/>
    <property type="project" value="WormBase"/>
</dbReference>
<dbReference type="GO" id="GO:0002119">
    <property type="term" value="P:nematode larval development"/>
    <property type="evidence" value="ECO:0000316"/>
    <property type="project" value="UniProtKB"/>
</dbReference>
<dbReference type="GO" id="GO:0040009">
    <property type="term" value="P:regulation of growth rate"/>
    <property type="evidence" value="ECO:0000316"/>
    <property type="project" value="UniProtKB"/>
</dbReference>
<dbReference type="GO" id="GO:0008380">
    <property type="term" value="P:RNA splicing"/>
    <property type="evidence" value="ECO:0000303"/>
    <property type="project" value="UniProtKB"/>
</dbReference>
<dbReference type="GO" id="GO:0007283">
    <property type="term" value="P:spermatogenesis"/>
    <property type="evidence" value="ECO:0000316"/>
    <property type="project" value="UniProtKB"/>
</dbReference>
<dbReference type="CDD" id="cd12337">
    <property type="entry name" value="RRM1_SRSF4_like"/>
    <property type="match status" value="1"/>
</dbReference>
<dbReference type="CDD" id="cd12339">
    <property type="entry name" value="RRM2_SRSF1_4_like"/>
    <property type="match status" value="1"/>
</dbReference>
<dbReference type="FunFam" id="3.30.70.330:FF:000028">
    <property type="entry name" value="Putative serine/arginine-rich splicing factor 4"/>
    <property type="match status" value="1"/>
</dbReference>
<dbReference type="FunFam" id="3.30.70.330:FF:001067">
    <property type="entry name" value="Serine/arginine-rich splicing factor 4"/>
    <property type="match status" value="1"/>
</dbReference>
<dbReference type="Gene3D" id="3.30.70.330">
    <property type="match status" value="2"/>
</dbReference>
<dbReference type="InterPro" id="IPR012677">
    <property type="entry name" value="Nucleotide-bd_a/b_plait_sf"/>
</dbReference>
<dbReference type="InterPro" id="IPR035979">
    <property type="entry name" value="RBD_domain_sf"/>
</dbReference>
<dbReference type="InterPro" id="IPR000504">
    <property type="entry name" value="RRM_dom"/>
</dbReference>
<dbReference type="InterPro" id="IPR050374">
    <property type="entry name" value="RRT5_SRSF_SR"/>
</dbReference>
<dbReference type="PANTHER" id="PTHR23003">
    <property type="entry name" value="RNA RECOGNITION MOTIF RRM DOMAIN CONTAINING PROTEIN"/>
    <property type="match status" value="1"/>
</dbReference>
<dbReference type="PANTHER" id="PTHR23003:SF51">
    <property type="entry name" value="SERINE-ARGININE PROTEIN 55"/>
    <property type="match status" value="1"/>
</dbReference>
<dbReference type="Pfam" id="PF00076">
    <property type="entry name" value="RRM_1"/>
    <property type="match status" value="2"/>
</dbReference>
<dbReference type="SMART" id="SM00360">
    <property type="entry name" value="RRM"/>
    <property type="match status" value="2"/>
</dbReference>
<dbReference type="SUPFAM" id="SSF54928">
    <property type="entry name" value="RNA-binding domain, RBD"/>
    <property type="match status" value="1"/>
</dbReference>
<dbReference type="PROSITE" id="PS50102">
    <property type="entry name" value="RRM"/>
    <property type="match status" value="2"/>
</dbReference>
<comment type="function">
    <text evidence="5 6">Plays a functionally redundant role in spermatogenesis and growth rate control. Required for the development of somatic gonad structures and for progression from larval stage to adulthood.</text>
</comment>
<comment type="subcellular location">
    <subcellularLocation>
        <location evidence="6">Nucleus</location>
    </subcellularLocation>
</comment>
<comment type="PTM">
    <text evidence="1">Extensively phosphorylated on serine residues in the RS domain.</text>
</comment>
<comment type="miscellaneous">
    <text>RNA-mediated interference (RNAi) of rsp-1 and rsp-2 result in reduced brood sizes and abnormal egg-laying behavior, and the presence of unusual vacuolated structures in some of the secondary spermatocytes, spermatids and spermatozoa. Rsp-2/rsp-6 RNAi caused severe abnormalities in somatic gonad structures and in some cases animals were arrested or dead at the larval stage.</text>
</comment>
<comment type="similarity">
    <text evidence="2">Belongs to the splicing factor SR family.</text>
</comment>
<protein>
    <recommendedName>
        <fullName>Probable splicing factor, arginine/serine-rich 2</fullName>
    </recommendedName>
    <alternativeName>
        <fullName>CeSRp40</fullName>
    </alternativeName>
    <alternativeName>
        <fullName>RNA-binding protein srp-4</fullName>
    </alternativeName>
</protein>
<proteinExistence type="inferred from homology"/>
<gene>
    <name type="primary">rsp-2</name>
    <name evidence="7" type="synonym">srp-4</name>
    <name type="ORF">W02B12.2</name>
</gene>
<keyword id="KW-0217">Developmental protein</keyword>
<keyword id="KW-0221">Differentiation</keyword>
<keyword id="KW-0334">Gonadal differentiation</keyword>
<keyword id="KW-0341">Growth regulation</keyword>
<keyword id="KW-0507">mRNA processing</keyword>
<keyword id="KW-0508">mRNA splicing</keyword>
<keyword id="KW-0539">Nucleus</keyword>
<keyword id="KW-0597">Phosphoprotein</keyword>
<keyword id="KW-1185">Reference proteome</keyword>
<keyword id="KW-0677">Repeat</keyword>
<keyword id="KW-0694">RNA-binding</keyword>
<keyword id="KW-0744">Spermatogenesis</keyword>